<organism>
    <name type="scientific">Homo sapiens</name>
    <name type="common">Human</name>
    <dbReference type="NCBI Taxonomy" id="9606"/>
    <lineage>
        <taxon>Eukaryota</taxon>
        <taxon>Metazoa</taxon>
        <taxon>Chordata</taxon>
        <taxon>Craniata</taxon>
        <taxon>Vertebrata</taxon>
        <taxon>Euteleostomi</taxon>
        <taxon>Mammalia</taxon>
        <taxon>Eutheria</taxon>
        <taxon>Euarchontoglires</taxon>
        <taxon>Primates</taxon>
        <taxon>Haplorrhini</taxon>
        <taxon>Catarrhini</taxon>
        <taxon>Hominidae</taxon>
        <taxon>Homo</taxon>
    </lineage>
</organism>
<comment type="function">
    <text evidence="1">Transcriptional regulator.</text>
</comment>
<comment type="interaction">
    <interactant intactId="EBI-17491518">
        <id>Q6ZN32</id>
    </interactant>
    <interactant intactId="EBI-17490746">
        <id>A8MTQ0</id>
        <label>NOTO</label>
    </interactant>
    <organismsDiffer>false</organismsDiffer>
    <experiments>3</experiments>
</comment>
<comment type="subcellular location">
    <subcellularLocation>
        <location evidence="2">Nucleus</location>
    </subcellularLocation>
</comment>
<comment type="similarity">
    <text evidence="4">Belongs to the ETS family.</text>
</comment>
<protein>
    <recommendedName>
        <fullName>ETS translocation variant 3-like protein</fullName>
    </recommendedName>
</protein>
<evidence type="ECO:0000250" key="1"/>
<evidence type="ECO:0000255" key="2">
    <source>
        <dbReference type="PROSITE-ProRule" id="PRU00237"/>
    </source>
</evidence>
<evidence type="ECO:0000256" key="3">
    <source>
        <dbReference type="SAM" id="MobiDB-lite"/>
    </source>
</evidence>
<evidence type="ECO:0000305" key="4"/>
<accession>Q6ZN32</accession>
<feature type="chain" id="PRO_0000325822" description="ETS translocation variant 3-like protein">
    <location>
        <begin position="1"/>
        <end position="361"/>
    </location>
</feature>
<feature type="DNA-binding region" description="ETS" evidence="2">
    <location>
        <begin position="39"/>
        <end position="120"/>
    </location>
</feature>
<feature type="region of interest" description="Disordered" evidence="3">
    <location>
        <begin position="178"/>
        <end position="201"/>
    </location>
</feature>
<feature type="sequence variant" id="VAR_039928" description="In dbSNP:rs16838078.">
    <original>S</original>
    <variation>A</variation>
    <location>
        <position position="19"/>
    </location>
</feature>
<feature type="sequence variant" id="VAR_048949" description="In dbSNP:rs12083811.">
    <original>R</original>
    <variation>W</variation>
    <location>
        <position position="151"/>
    </location>
</feature>
<feature type="sequence variant" id="VAR_039929" description="In dbSNP:rs12136960.">
    <original>G</original>
    <variation>A</variation>
    <location>
        <position position="263"/>
    </location>
</feature>
<feature type="sequence variant" id="VAR_039930" description="In dbSNP:rs12126791.">
    <original>M</original>
    <variation>V</variation>
    <location>
        <position position="318"/>
    </location>
</feature>
<dbReference type="EMBL" id="AK131392">
    <property type="protein sequence ID" value="BAD18543.1"/>
    <property type="molecule type" value="mRNA"/>
</dbReference>
<dbReference type="CCDS" id="CCDS30893.1"/>
<dbReference type="RefSeq" id="NP_001004341.1">
    <property type="nucleotide sequence ID" value="NM_001004341.2"/>
</dbReference>
<dbReference type="SMR" id="Q6ZN32"/>
<dbReference type="BioGRID" id="136814">
    <property type="interactions" value="1"/>
</dbReference>
<dbReference type="FunCoup" id="Q6ZN32">
    <property type="interactions" value="101"/>
</dbReference>
<dbReference type="IntAct" id="Q6ZN32">
    <property type="interactions" value="1"/>
</dbReference>
<dbReference type="STRING" id="9606.ENSP00000430271"/>
<dbReference type="iPTMnet" id="Q6ZN32"/>
<dbReference type="PhosphoSitePlus" id="Q6ZN32"/>
<dbReference type="BioMuta" id="ETV3L"/>
<dbReference type="DMDM" id="74749565"/>
<dbReference type="jPOST" id="Q6ZN32"/>
<dbReference type="MassIVE" id="Q6ZN32"/>
<dbReference type="PaxDb" id="9606-ENSP00000430271"/>
<dbReference type="PeptideAtlas" id="Q6ZN32"/>
<dbReference type="ProteomicsDB" id="67971"/>
<dbReference type="Antibodypedia" id="58037">
    <property type="antibodies" value="98 antibodies from 10 providers"/>
</dbReference>
<dbReference type="DNASU" id="440695"/>
<dbReference type="Ensembl" id="ENST00000454449.3">
    <property type="protein sequence ID" value="ENSP00000430271.1"/>
    <property type="gene ID" value="ENSG00000253831.3"/>
</dbReference>
<dbReference type="Ensembl" id="ENST00000671886.1">
    <property type="protein sequence ID" value="ENSP00000500322.1"/>
    <property type="gene ID" value="ENSG00000253831.3"/>
</dbReference>
<dbReference type="Ensembl" id="ENST00000671942.1">
    <property type="protein sequence ID" value="ENSP00000500028.1"/>
    <property type="gene ID" value="ENSG00000253831.3"/>
</dbReference>
<dbReference type="Ensembl" id="ENST00000672100.1">
    <property type="protein sequence ID" value="ENSP00000500154.1"/>
    <property type="gene ID" value="ENSG00000253831.3"/>
</dbReference>
<dbReference type="GeneID" id="440695"/>
<dbReference type="KEGG" id="hsa:440695"/>
<dbReference type="MANE-Select" id="ENST00000454449.3">
    <property type="protein sequence ID" value="ENSP00000430271.1"/>
    <property type="RefSeq nucleotide sequence ID" value="NM_001004341.2"/>
    <property type="RefSeq protein sequence ID" value="NP_001004341.1"/>
</dbReference>
<dbReference type="UCSC" id="uc001fqq.3">
    <property type="organism name" value="human"/>
</dbReference>
<dbReference type="AGR" id="HGNC:33834"/>
<dbReference type="CTD" id="440695"/>
<dbReference type="GeneCards" id="ETV3L"/>
<dbReference type="HGNC" id="HGNC:33834">
    <property type="gene designation" value="ETV3L"/>
</dbReference>
<dbReference type="HPA" id="ENSG00000253831">
    <property type="expression patterns" value="Tissue enriched (choroid)"/>
</dbReference>
<dbReference type="MalaCards" id="ETV3L"/>
<dbReference type="MIM" id="621105">
    <property type="type" value="gene"/>
</dbReference>
<dbReference type="neXtProt" id="NX_Q6ZN32"/>
<dbReference type="OpenTargets" id="ENSG00000253831"/>
<dbReference type="PharmGKB" id="PA162385461"/>
<dbReference type="VEuPathDB" id="HostDB:ENSG00000253831"/>
<dbReference type="eggNOG" id="KOG3806">
    <property type="taxonomic scope" value="Eukaryota"/>
</dbReference>
<dbReference type="GeneTree" id="ENSGT00940000162271"/>
<dbReference type="HOGENOM" id="CLU_065588_1_0_1"/>
<dbReference type="InParanoid" id="Q6ZN32"/>
<dbReference type="OMA" id="NCPLWEV"/>
<dbReference type="OrthoDB" id="10067219at2759"/>
<dbReference type="PAN-GO" id="Q6ZN32">
    <property type="GO annotations" value="4 GO annotations based on evolutionary models"/>
</dbReference>
<dbReference type="PhylomeDB" id="Q6ZN32"/>
<dbReference type="TreeFam" id="TF351065"/>
<dbReference type="PathwayCommons" id="Q6ZN32"/>
<dbReference type="SignaLink" id="Q6ZN32"/>
<dbReference type="BioGRID-ORCS" id="440695">
    <property type="hits" value="8 hits in 1136 CRISPR screens"/>
</dbReference>
<dbReference type="ChiTaRS" id="ETV3L">
    <property type="organism name" value="human"/>
</dbReference>
<dbReference type="GenomeRNAi" id="440695"/>
<dbReference type="Pharos" id="Q6ZN32">
    <property type="development level" value="Tdark"/>
</dbReference>
<dbReference type="PRO" id="PR:Q6ZN32"/>
<dbReference type="Proteomes" id="UP000005640">
    <property type="component" value="Chromosome 1"/>
</dbReference>
<dbReference type="RNAct" id="Q6ZN32">
    <property type="molecule type" value="protein"/>
</dbReference>
<dbReference type="Bgee" id="ENSG00000253831">
    <property type="expression patterns" value="Expressed in nucleus accumbens and 22 other cell types or tissues"/>
</dbReference>
<dbReference type="GO" id="GO:0005634">
    <property type="term" value="C:nucleus"/>
    <property type="evidence" value="ECO:0000318"/>
    <property type="project" value="GO_Central"/>
</dbReference>
<dbReference type="GO" id="GO:0000981">
    <property type="term" value="F:DNA-binding transcription factor activity, RNA polymerase II-specific"/>
    <property type="evidence" value="ECO:0000318"/>
    <property type="project" value="GO_Central"/>
</dbReference>
<dbReference type="GO" id="GO:0043565">
    <property type="term" value="F:sequence-specific DNA binding"/>
    <property type="evidence" value="ECO:0007669"/>
    <property type="project" value="InterPro"/>
</dbReference>
<dbReference type="GO" id="GO:0030154">
    <property type="term" value="P:cell differentiation"/>
    <property type="evidence" value="ECO:0000318"/>
    <property type="project" value="GO_Central"/>
</dbReference>
<dbReference type="GO" id="GO:0006357">
    <property type="term" value="P:regulation of transcription by RNA polymerase II"/>
    <property type="evidence" value="ECO:0000318"/>
    <property type="project" value="GO_Central"/>
</dbReference>
<dbReference type="FunFam" id="1.10.10.10:FF:000059">
    <property type="entry name" value="ETS translocation variant 3"/>
    <property type="match status" value="1"/>
</dbReference>
<dbReference type="Gene3D" id="1.10.10.10">
    <property type="entry name" value="Winged helix-like DNA-binding domain superfamily/Winged helix DNA-binding domain"/>
    <property type="match status" value="1"/>
</dbReference>
<dbReference type="InterPro" id="IPR000418">
    <property type="entry name" value="Ets_dom"/>
</dbReference>
<dbReference type="InterPro" id="IPR046328">
    <property type="entry name" value="ETS_fam"/>
</dbReference>
<dbReference type="InterPro" id="IPR036388">
    <property type="entry name" value="WH-like_DNA-bd_sf"/>
</dbReference>
<dbReference type="InterPro" id="IPR036390">
    <property type="entry name" value="WH_DNA-bd_sf"/>
</dbReference>
<dbReference type="PANTHER" id="PTHR11849">
    <property type="entry name" value="ETS"/>
    <property type="match status" value="1"/>
</dbReference>
<dbReference type="PANTHER" id="PTHR11849:SF306">
    <property type="entry name" value="ETS TRANSLOCATION VARIANT 3-LIKE PROTEIN"/>
    <property type="match status" value="1"/>
</dbReference>
<dbReference type="Pfam" id="PF00178">
    <property type="entry name" value="Ets"/>
    <property type="match status" value="1"/>
</dbReference>
<dbReference type="PRINTS" id="PR00454">
    <property type="entry name" value="ETSDOMAIN"/>
</dbReference>
<dbReference type="SMART" id="SM00413">
    <property type="entry name" value="ETS"/>
    <property type="match status" value="1"/>
</dbReference>
<dbReference type="SUPFAM" id="SSF46785">
    <property type="entry name" value="Winged helix' DNA-binding domain"/>
    <property type="match status" value="1"/>
</dbReference>
<dbReference type="PROSITE" id="PS00345">
    <property type="entry name" value="ETS_DOMAIN_1"/>
    <property type="match status" value="1"/>
</dbReference>
<dbReference type="PROSITE" id="PS00346">
    <property type="entry name" value="ETS_DOMAIN_2"/>
    <property type="match status" value="1"/>
</dbReference>
<dbReference type="PROSITE" id="PS50061">
    <property type="entry name" value="ETS_DOMAIN_3"/>
    <property type="match status" value="1"/>
</dbReference>
<keyword id="KW-0238">DNA-binding</keyword>
<keyword id="KW-0539">Nucleus</keyword>
<keyword id="KW-1185">Reference proteome</keyword>
<keyword id="KW-0804">Transcription</keyword>
<keyword id="KW-0805">Transcription regulation</keyword>
<proteinExistence type="evidence at protein level"/>
<sequence length="361" mass="39948">MHCSCLAEGIPANPGNWISGLAFPDWAYKAESSPGSRQIQLWHFILELLQKEEFRHVIAWQQGEYGEFVIKDPDEVARLWGRRKCKPQMNYDKLSRALRYYYNKRILHKTKGKRFTYKFNFSKLIVVNYPLWEVRAPPSPHLLLGAPALCRPALVPVGVQSELLHSMLFAHQAMVEQLTGQQTPRGPPETSGDKKGSSSSVYRLGSAPGPCRLGLCCHLGSVQGELPGVASFTPPLPPPLPSNWTCLSGPFLPPLPSEQQLPGAFKPDILLPGPRSLPGAWHFPGLPLLAGLGQGAGERLWLLSLRPEGLEVKPAPMMEAKGGLDPREVFCPETRRLKTGEESLTSPNLENLKAVWPLDPP</sequence>
<name>ETV3L_HUMAN</name>
<gene>
    <name type="primary">ETV3L</name>
</gene>
<reference key="1">
    <citation type="journal article" date="2004" name="Nat. Genet.">
        <title>Complete sequencing and characterization of 21,243 full-length human cDNAs.</title>
        <authorList>
            <person name="Ota T."/>
            <person name="Suzuki Y."/>
            <person name="Nishikawa T."/>
            <person name="Otsuki T."/>
            <person name="Sugiyama T."/>
            <person name="Irie R."/>
            <person name="Wakamatsu A."/>
            <person name="Hayashi K."/>
            <person name="Sato H."/>
            <person name="Nagai K."/>
            <person name="Kimura K."/>
            <person name="Makita H."/>
            <person name="Sekine M."/>
            <person name="Obayashi M."/>
            <person name="Nishi T."/>
            <person name="Shibahara T."/>
            <person name="Tanaka T."/>
            <person name="Ishii S."/>
            <person name="Yamamoto J."/>
            <person name="Saito K."/>
            <person name="Kawai Y."/>
            <person name="Isono Y."/>
            <person name="Nakamura Y."/>
            <person name="Nagahari K."/>
            <person name="Murakami K."/>
            <person name="Yasuda T."/>
            <person name="Iwayanagi T."/>
            <person name="Wagatsuma M."/>
            <person name="Shiratori A."/>
            <person name="Sudo H."/>
            <person name="Hosoiri T."/>
            <person name="Kaku Y."/>
            <person name="Kodaira H."/>
            <person name="Kondo H."/>
            <person name="Sugawara M."/>
            <person name="Takahashi M."/>
            <person name="Kanda K."/>
            <person name="Yokoi T."/>
            <person name="Furuya T."/>
            <person name="Kikkawa E."/>
            <person name="Omura Y."/>
            <person name="Abe K."/>
            <person name="Kamihara K."/>
            <person name="Katsuta N."/>
            <person name="Sato K."/>
            <person name="Tanikawa M."/>
            <person name="Yamazaki M."/>
            <person name="Ninomiya K."/>
            <person name="Ishibashi T."/>
            <person name="Yamashita H."/>
            <person name="Murakawa K."/>
            <person name="Fujimori K."/>
            <person name="Tanai H."/>
            <person name="Kimata M."/>
            <person name="Watanabe M."/>
            <person name="Hiraoka S."/>
            <person name="Chiba Y."/>
            <person name="Ishida S."/>
            <person name="Ono Y."/>
            <person name="Takiguchi S."/>
            <person name="Watanabe S."/>
            <person name="Yosida M."/>
            <person name="Hotuta T."/>
            <person name="Kusano J."/>
            <person name="Kanehori K."/>
            <person name="Takahashi-Fujii A."/>
            <person name="Hara H."/>
            <person name="Tanase T.-O."/>
            <person name="Nomura Y."/>
            <person name="Togiya S."/>
            <person name="Komai F."/>
            <person name="Hara R."/>
            <person name="Takeuchi K."/>
            <person name="Arita M."/>
            <person name="Imose N."/>
            <person name="Musashino K."/>
            <person name="Yuuki H."/>
            <person name="Oshima A."/>
            <person name="Sasaki N."/>
            <person name="Aotsuka S."/>
            <person name="Yoshikawa Y."/>
            <person name="Matsunawa H."/>
            <person name="Ichihara T."/>
            <person name="Shiohata N."/>
            <person name="Sano S."/>
            <person name="Moriya S."/>
            <person name="Momiyama H."/>
            <person name="Satoh N."/>
            <person name="Takami S."/>
            <person name="Terashima Y."/>
            <person name="Suzuki O."/>
            <person name="Nakagawa S."/>
            <person name="Senoh A."/>
            <person name="Mizoguchi H."/>
            <person name="Goto Y."/>
            <person name="Shimizu F."/>
            <person name="Wakebe H."/>
            <person name="Hishigaki H."/>
            <person name="Watanabe T."/>
            <person name="Sugiyama A."/>
            <person name="Takemoto M."/>
            <person name="Kawakami B."/>
            <person name="Yamazaki M."/>
            <person name="Watanabe K."/>
            <person name="Kumagai A."/>
            <person name="Itakura S."/>
            <person name="Fukuzumi Y."/>
            <person name="Fujimori Y."/>
            <person name="Komiyama M."/>
            <person name="Tashiro H."/>
            <person name="Tanigami A."/>
            <person name="Fujiwara T."/>
            <person name="Ono T."/>
            <person name="Yamada K."/>
            <person name="Fujii Y."/>
            <person name="Ozaki K."/>
            <person name="Hirao M."/>
            <person name="Ohmori Y."/>
            <person name="Kawabata A."/>
            <person name="Hikiji T."/>
            <person name="Kobatake N."/>
            <person name="Inagaki H."/>
            <person name="Ikema Y."/>
            <person name="Okamoto S."/>
            <person name="Okitani R."/>
            <person name="Kawakami T."/>
            <person name="Noguchi S."/>
            <person name="Itoh T."/>
            <person name="Shigeta K."/>
            <person name="Senba T."/>
            <person name="Matsumura K."/>
            <person name="Nakajima Y."/>
            <person name="Mizuno T."/>
            <person name="Morinaga M."/>
            <person name="Sasaki M."/>
            <person name="Togashi T."/>
            <person name="Oyama M."/>
            <person name="Hata H."/>
            <person name="Watanabe M."/>
            <person name="Komatsu T."/>
            <person name="Mizushima-Sugano J."/>
            <person name="Satoh T."/>
            <person name="Shirai Y."/>
            <person name="Takahashi Y."/>
            <person name="Nakagawa K."/>
            <person name="Okumura K."/>
            <person name="Nagase T."/>
            <person name="Nomura N."/>
            <person name="Kikuchi H."/>
            <person name="Masuho Y."/>
            <person name="Yamashita R."/>
            <person name="Nakai K."/>
            <person name="Yada T."/>
            <person name="Nakamura Y."/>
            <person name="Ohara O."/>
            <person name="Isogai T."/>
            <person name="Sugano S."/>
        </authorList>
    </citation>
    <scope>NUCLEOTIDE SEQUENCE [LARGE SCALE MRNA]</scope>
    <source>
        <tissue>Subthalamic nucleus</tissue>
    </source>
</reference>